<name>LEU3_PARM1</name>
<protein>
    <recommendedName>
        <fullName evidence="1">3-isopropylmalate dehydrogenase</fullName>
        <ecNumber evidence="1">1.1.1.85</ecNumber>
    </recommendedName>
    <alternativeName>
        <fullName evidence="1">3-IPM-DH</fullName>
    </alternativeName>
    <alternativeName>
        <fullName evidence="1">Beta-IPM dehydrogenase</fullName>
        <shortName evidence="1">IMDH</shortName>
    </alternativeName>
</protein>
<keyword id="KW-0028">Amino-acid biosynthesis</keyword>
<keyword id="KW-0100">Branched-chain amino acid biosynthesis</keyword>
<keyword id="KW-0963">Cytoplasm</keyword>
<keyword id="KW-0432">Leucine biosynthesis</keyword>
<keyword id="KW-0460">Magnesium</keyword>
<keyword id="KW-0464">Manganese</keyword>
<keyword id="KW-0479">Metal-binding</keyword>
<keyword id="KW-0520">NAD</keyword>
<keyword id="KW-0560">Oxidoreductase</keyword>
<gene>
    <name evidence="1" type="primary">leuB</name>
    <name type="ordered locus">amb4069</name>
</gene>
<reference key="1">
    <citation type="journal article" date="2005" name="DNA Res.">
        <title>Complete genome sequence of the facultative anaerobic magnetotactic bacterium Magnetospirillum sp. strain AMB-1.</title>
        <authorList>
            <person name="Matsunaga T."/>
            <person name="Okamura Y."/>
            <person name="Fukuda Y."/>
            <person name="Wahyudi A.T."/>
            <person name="Murase Y."/>
            <person name="Takeyama H."/>
        </authorList>
    </citation>
    <scope>NUCLEOTIDE SEQUENCE [LARGE SCALE GENOMIC DNA]</scope>
    <source>
        <strain>ATCC 700264 / AMB-1</strain>
    </source>
</reference>
<dbReference type="EC" id="1.1.1.85" evidence="1"/>
<dbReference type="EMBL" id="AP007255">
    <property type="protein sequence ID" value="BAE52873.1"/>
    <property type="molecule type" value="Genomic_DNA"/>
</dbReference>
<dbReference type="RefSeq" id="WP_011386420.1">
    <property type="nucleotide sequence ID" value="NC_007626.1"/>
</dbReference>
<dbReference type="SMR" id="Q2VZV2"/>
<dbReference type="STRING" id="342108.amb4069"/>
<dbReference type="KEGG" id="mag:amb4069"/>
<dbReference type="HOGENOM" id="CLU_031953_0_3_5"/>
<dbReference type="OrthoDB" id="9767905at2"/>
<dbReference type="UniPathway" id="UPA00048">
    <property type="reaction ID" value="UER00072"/>
</dbReference>
<dbReference type="Proteomes" id="UP000007058">
    <property type="component" value="Chromosome"/>
</dbReference>
<dbReference type="GO" id="GO:0005829">
    <property type="term" value="C:cytosol"/>
    <property type="evidence" value="ECO:0007669"/>
    <property type="project" value="TreeGrafter"/>
</dbReference>
<dbReference type="GO" id="GO:0003862">
    <property type="term" value="F:3-isopropylmalate dehydrogenase activity"/>
    <property type="evidence" value="ECO:0007669"/>
    <property type="project" value="UniProtKB-UniRule"/>
</dbReference>
<dbReference type="GO" id="GO:0000287">
    <property type="term" value="F:magnesium ion binding"/>
    <property type="evidence" value="ECO:0007669"/>
    <property type="project" value="InterPro"/>
</dbReference>
<dbReference type="GO" id="GO:0051287">
    <property type="term" value="F:NAD binding"/>
    <property type="evidence" value="ECO:0007669"/>
    <property type="project" value="InterPro"/>
</dbReference>
<dbReference type="GO" id="GO:0009098">
    <property type="term" value="P:L-leucine biosynthetic process"/>
    <property type="evidence" value="ECO:0007669"/>
    <property type="project" value="UniProtKB-UniRule"/>
</dbReference>
<dbReference type="FunFam" id="3.40.718.10:FF:000028">
    <property type="entry name" value="3-isopropylmalate dehydrogenase"/>
    <property type="match status" value="1"/>
</dbReference>
<dbReference type="Gene3D" id="3.40.718.10">
    <property type="entry name" value="Isopropylmalate Dehydrogenase"/>
    <property type="match status" value="1"/>
</dbReference>
<dbReference type="HAMAP" id="MF_01033">
    <property type="entry name" value="LeuB_type1"/>
    <property type="match status" value="1"/>
</dbReference>
<dbReference type="InterPro" id="IPR019818">
    <property type="entry name" value="IsoCit/isopropylmalate_DH_CS"/>
</dbReference>
<dbReference type="InterPro" id="IPR024084">
    <property type="entry name" value="IsoPropMal-DH-like_dom"/>
</dbReference>
<dbReference type="InterPro" id="IPR004429">
    <property type="entry name" value="Isopropylmalate_DH"/>
</dbReference>
<dbReference type="NCBIfam" id="TIGR00169">
    <property type="entry name" value="leuB"/>
    <property type="match status" value="1"/>
</dbReference>
<dbReference type="PANTHER" id="PTHR42979">
    <property type="entry name" value="3-ISOPROPYLMALATE DEHYDROGENASE"/>
    <property type="match status" value="1"/>
</dbReference>
<dbReference type="PANTHER" id="PTHR42979:SF1">
    <property type="entry name" value="3-ISOPROPYLMALATE DEHYDROGENASE"/>
    <property type="match status" value="1"/>
</dbReference>
<dbReference type="Pfam" id="PF00180">
    <property type="entry name" value="Iso_dh"/>
    <property type="match status" value="1"/>
</dbReference>
<dbReference type="SMART" id="SM01329">
    <property type="entry name" value="Iso_dh"/>
    <property type="match status" value="1"/>
</dbReference>
<dbReference type="SUPFAM" id="SSF53659">
    <property type="entry name" value="Isocitrate/Isopropylmalate dehydrogenase-like"/>
    <property type="match status" value="1"/>
</dbReference>
<dbReference type="PROSITE" id="PS00470">
    <property type="entry name" value="IDH_IMDH"/>
    <property type="match status" value="1"/>
</dbReference>
<organism>
    <name type="scientific">Paramagnetospirillum magneticum (strain ATCC 700264 / AMB-1)</name>
    <name type="common">Magnetospirillum magneticum</name>
    <dbReference type="NCBI Taxonomy" id="342108"/>
    <lineage>
        <taxon>Bacteria</taxon>
        <taxon>Pseudomonadati</taxon>
        <taxon>Pseudomonadota</taxon>
        <taxon>Alphaproteobacteria</taxon>
        <taxon>Rhodospirillales</taxon>
        <taxon>Magnetospirillaceae</taxon>
        <taxon>Paramagnetospirillum</taxon>
    </lineage>
</organism>
<evidence type="ECO:0000255" key="1">
    <source>
        <dbReference type="HAMAP-Rule" id="MF_01033"/>
    </source>
</evidence>
<accession>Q2VZV2</accession>
<sequence length="369" mass="40104">MAAKKLLILPGDGIGVEVMAQVRRIIDWMGRKRKIEFEITEGLLGGAAYDVHGTPYPAETLEAALAADAVLLGAVGGPKWDDLPFDKKPERGLLGIRKDMGLFANLRPATVLEALADASTLKAEVVSGLDIMILRELTGGLYFGQPRGIDTLPDGTRKGYNTLVYTTPEIQRIGRVAFDLARKRNKKLCSVDKANVLECTVLWREEMIKLQKEEFPDVELTHMYVDNAAMQLVRNPKQFDVMVTENMFGDILSDCAAMLTGSLGMLPSASLGEADAQGKRKALYEPVHGSAPDIAGKDMANPLATIMSFAMCLRYSFDMAAEADLIETAVKNVLKGGLRTADIMQPGKAKVSTTVMGEAVVRELDKLNA</sequence>
<feature type="chain" id="PRO_0000250120" description="3-isopropylmalate dehydrogenase">
    <location>
        <begin position="1"/>
        <end position="369"/>
    </location>
</feature>
<feature type="binding site" evidence="1">
    <location>
        <begin position="77"/>
        <end position="90"/>
    </location>
    <ligand>
        <name>NAD(+)</name>
        <dbReference type="ChEBI" id="CHEBI:57540"/>
    </ligand>
</feature>
<feature type="binding site" evidence="1">
    <location>
        <position position="97"/>
    </location>
    <ligand>
        <name>substrate</name>
    </ligand>
</feature>
<feature type="binding site" evidence="1">
    <location>
        <position position="107"/>
    </location>
    <ligand>
        <name>substrate</name>
    </ligand>
</feature>
<feature type="binding site" evidence="1">
    <location>
        <position position="135"/>
    </location>
    <ligand>
        <name>substrate</name>
    </ligand>
</feature>
<feature type="binding site" evidence="1">
    <location>
        <position position="226"/>
    </location>
    <ligand>
        <name>Mg(2+)</name>
        <dbReference type="ChEBI" id="CHEBI:18420"/>
    </ligand>
</feature>
<feature type="binding site" evidence="1">
    <location>
        <position position="226"/>
    </location>
    <ligand>
        <name>substrate</name>
    </ligand>
</feature>
<feature type="binding site" evidence="1">
    <location>
        <position position="250"/>
    </location>
    <ligand>
        <name>Mg(2+)</name>
        <dbReference type="ChEBI" id="CHEBI:18420"/>
    </ligand>
</feature>
<feature type="binding site" evidence="1">
    <location>
        <position position="254"/>
    </location>
    <ligand>
        <name>Mg(2+)</name>
        <dbReference type="ChEBI" id="CHEBI:18420"/>
    </ligand>
</feature>
<feature type="binding site" evidence="1">
    <location>
        <begin position="289"/>
        <end position="301"/>
    </location>
    <ligand>
        <name>NAD(+)</name>
        <dbReference type="ChEBI" id="CHEBI:57540"/>
    </ligand>
</feature>
<feature type="site" description="Important for catalysis" evidence="1">
    <location>
        <position position="142"/>
    </location>
</feature>
<feature type="site" description="Important for catalysis" evidence="1">
    <location>
        <position position="193"/>
    </location>
</feature>
<comment type="function">
    <text evidence="1">Catalyzes the oxidation of 3-carboxy-2-hydroxy-4-methylpentanoate (3-isopropylmalate) to 3-carboxy-4-methyl-2-oxopentanoate. The product decarboxylates to 4-methyl-2 oxopentanoate.</text>
</comment>
<comment type="catalytic activity">
    <reaction evidence="1">
        <text>(2R,3S)-3-isopropylmalate + NAD(+) = 4-methyl-2-oxopentanoate + CO2 + NADH</text>
        <dbReference type="Rhea" id="RHEA:32271"/>
        <dbReference type="ChEBI" id="CHEBI:16526"/>
        <dbReference type="ChEBI" id="CHEBI:17865"/>
        <dbReference type="ChEBI" id="CHEBI:35121"/>
        <dbReference type="ChEBI" id="CHEBI:57540"/>
        <dbReference type="ChEBI" id="CHEBI:57945"/>
        <dbReference type="EC" id="1.1.1.85"/>
    </reaction>
</comment>
<comment type="cofactor">
    <cofactor evidence="1">
        <name>Mg(2+)</name>
        <dbReference type="ChEBI" id="CHEBI:18420"/>
    </cofactor>
    <cofactor evidence="1">
        <name>Mn(2+)</name>
        <dbReference type="ChEBI" id="CHEBI:29035"/>
    </cofactor>
    <text evidence="1">Binds 1 Mg(2+) or Mn(2+) ion per subunit.</text>
</comment>
<comment type="pathway">
    <text evidence="1">Amino-acid biosynthesis; L-leucine biosynthesis; L-leucine from 3-methyl-2-oxobutanoate: step 3/4.</text>
</comment>
<comment type="subunit">
    <text evidence="1">Homodimer.</text>
</comment>
<comment type="subcellular location">
    <subcellularLocation>
        <location evidence="1">Cytoplasm</location>
    </subcellularLocation>
</comment>
<comment type="similarity">
    <text evidence="1">Belongs to the isocitrate and isopropylmalate dehydrogenases family. LeuB type 1 subfamily.</text>
</comment>
<proteinExistence type="inferred from homology"/>